<sequence length="473" mass="51268">MTTCSRQFTSSSSMKGSCGIGGGIGGGSSRISSVLAGGSCRAPSTYGGGLSVSSRFSSGGACGLGGGYGGGFSSSSSFGSGFGGGYGGGLGAGFGGGLGAGFGGGFAGGDGLLVGSEKVTMQNLNDRLASYLDKVRALEEANADLEVKIRDWYQRQRPSEIKDYSPYFKTIEDLRNKIIAATIENAQPILQIDNARLAADDFRTKYEHELALRQTVEADVNGLRRVLDELTLARTDLEMQIEGLKEELAYLRKNHEEEMLALRGQTGGDVNVEMDAAPGVDLSRILNEMRDQYEQMAEKNRRDAETWFLSKTEELNKEVASNSELVQSSRSEVTELRRVLQGLEIELQSQLSMKASLENSLEETKGRYCMQLSQIQGLIGSVEEQLAQLRCEMEQQSQEYQILLDVKTRLEQEIATYRRLLEGEDAHLSSQQASGQSYSSREVFTSSSSSSSRQTRPILKEQSSSSFSQGQSS</sequence>
<keyword id="KW-0175">Coiled coil</keyword>
<keyword id="KW-0903">Direct protein sequencing</keyword>
<keyword id="KW-0225">Disease variant</keyword>
<keyword id="KW-0038">Ectodermal dysplasia</keyword>
<keyword id="KW-0403">Intermediate filament</keyword>
<keyword id="KW-0416">Keratin</keyword>
<keyword id="KW-1007">Palmoplantar keratoderma</keyword>
<keyword id="KW-1267">Proteomics identification</keyword>
<keyword id="KW-1185">Reference proteome</keyword>
<comment type="function">
    <text evidence="1">Epidermis-specific type I keratin that plays a key role in skin. Acts as a regulator of innate immunity in response to skin barrier breach: required for some inflammatory checkpoint for the skin barrier maintenance.</text>
</comment>
<comment type="subunit">
    <text evidence="1 11">Heterodimer of a type I and a type II keratin. KRT16 associates with KRT6 isomers (KRT6A or KRT6B) (By similarity). Interacts with TCHP (PubMed:15731013). Interacts with TRADD (By similarity).</text>
</comment>
<comment type="interaction">
    <interactant intactId="EBI-356410">
        <id>P08779</id>
    </interactant>
    <interactant intactId="EBI-8643161">
        <id>Q9NX04</id>
        <label>AIRIM</label>
    </interactant>
    <organismsDiffer>false</organismsDiffer>
    <experiments>3</experiments>
</comment>
<comment type="interaction">
    <interactant intactId="EBI-356410">
        <id>P08779</id>
    </interactant>
    <interactant intactId="EBI-17286414">
        <id>A2BDD9</id>
        <label>AMOT</label>
    </interactant>
    <organismsDiffer>false</organismsDiffer>
    <experiments>3</experiments>
</comment>
<comment type="interaction">
    <interactant intactId="EBI-356410">
        <id>P08779</id>
    </interactant>
    <interactant intactId="EBI-638194">
        <id>P53365</id>
        <label>ARFIP2</label>
    </interactant>
    <organismsDiffer>false</organismsDiffer>
    <experiments>3</experiments>
</comment>
<comment type="interaction">
    <interactant intactId="EBI-356410">
        <id>P08779</id>
    </interactant>
    <interactant intactId="EBI-747505">
        <id>Q8TAB5</id>
        <label>C1orf216</label>
    </interactant>
    <organismsDiffer>false</organismsDiffer>
    <experiments>3</experiments>
</comment>
<comment type="interaction">
    <interactant intactId="EBI-356410">
        <id>P08779</id>
    </interactant>
    <interactant intactId="EBI-11530605">
        <id>Q9H257-2</id>
        <label>CARD9</label>
    </interactant>
    <organismsDiffer>false</organismsDiffer>
    <experiments>3</experiments>
</comment>
<comment type="interaction">
    <interactant intactId="EBI-356410">
        <id>P08779</id>
    </interactant>
    <interactant intactId="EBI-10749669">
        <id>Q8IYE0</id>
        <label>CCDC146</label>
    </interactant>
    <organismsDiffer>false</organismsDiffer>
    <experiments>3</experiments>
</comment>
<comment type="interaction">
    <interactant intactId="EBI-356410">
        <id>P08779</id>
    </interactant>
    <interactant intactId="EBI-12165781">
        <id>Q96LX7-5</id>
        <label>CCDC17</label>
    </interactant>
    <organismsDiffer>false</organismsDiffer>
    <experiments>3</experiments>
</comment>
<comment type="interaction">
    <interactant intactId="EBI-356410">
        <id>P08779</id>
    </interactant>
    <interactant intactId="EBI-10175300">
        <id>Q8TD31-3</id>
        <label>CCHCR1</label>
    </interactant>
    <organismsDiffer>false</organismsDiffer>
    <experiments>3</experiments>
</comment>
<comment type="interaction">
    <interactant intactId="EBI-356410">
        <id>P08779</id>
    </interactant>
    <interactant intactId="EBI-395261">
        <id>P24863</id>
        <label>CCNC</label>
    </interactant>
    <organismsDiffer>false</organismsDiffer>
    <experiments>3</experiments>
</comment>
<comment type="interaction">
    <interactant intactId="EBI-356410">
        <id>P08779</id>
    </interactant>
    <interactant intactId="EBI-746238">
        <id>Q07002</id>
        <label>CDK18</label>
    </interactant>
    <organismsDiffer>false</organismsDiffer>
    <experiments>3</experiments>
</comment>
<comment type="interaction">
    <interactant intactId="EBI-356410">
        <id>P08779</id>
    </interactant>
    <interactant intactId="EBI-11521003">
        <id>Q9UIA0</id>
        <label>CYTH4</label>
    </interactant>
    <organismsDiffer>false</organismsDiffer>
    <experiments>3</experiments>
</comment>
<comment type="interaction">
    <interactant intactId="EBI-356410">
        <id>P08779</id>
    </interactant>
    <interactant intactId="EBI-6255981">
        <id>Q7L775</id>
        <label>EPM2AIP1</label>
    </interactant>
    <organismsDiffer>false</organismsDiffer>
    <experiments>3</experiments>
</comment>
<comment type="interaction">
    <interactant intactId="EBI-356410">
        <id>P08779</id>
    </interactant>
    <interactant intactId="EBI-1052570">
        <id>O95995</id>
        <label>GAS8</label>
    </interactant>
    <organismsDiffer>false</organismsDiffer>
    <experiments>3</experiments>
</comment>
<comment type="interaction">
    <interactant intactId="EBI-356410">
        <id>P08779</id>
    </interactant>
    <interactant intactId="EBI-10211741">
        <id>P50151</id>
        <label>GNG10</label>
    </interactant>
    <organismsDiffer>false</organismsDiffer>
    <experiments>3</experiments>
</comment>
<comment type="interaction">
    <interactant intactId="EBI-356410">
        <id>P08779</id>
    </interactant>
    <interactant intactId="EBI-740220">
        <id>O14964</id>
        <label>HGS</label>
    </interactant>
    <organismsDiffer>false</organismsDiffer>
    <experiments>3</experiments>
</comment>
<comment type="interaction">
    <interactant intactId="EBI-356410">
        <id>P08779</id>
    </interactant>
    <interactant intactId="EBI-14069005">
        <id>Q9BVG8-5</id>
        <label>KIFC3</label>
    </interactant>
    <organismsDiffer>false</organismsDiffer>
    <experiments>3</experiments>
</comment>
<comment type="interaction">
    <interactant intactId="EBI-356410">
        <id>P08779</id>
    </interactant>
    <interactant intactId="EBI-949319">
        <id>Q9NSK0</id>
        <label>KLC4</label>
    </interactant>
    <organismsDiffer>false</organismsDiffer>
    <experiments>3</experiments>
</comment>
<comment type="interaction">
    <interactant intactId="EBI-356410">
        <id>P08779</id>
    </interactant>
    <interactant intactId="EBI-298429">
        <id>P04264</id>
        <label>KRT1</label>
    </interactant>
    <organismsDiffer>false</organismsDiffer>
    <experiments>3</experiments>
</comment>
<comment type="interaction">
    <interactant intactId="EBI-356410">
        <id>P08779</id>
    </interactant>
    <interactant intactId="EBI-1247312">
        <id>P35908</id>
        <label>KRT2</label>
    </interactant>
    <organismsDiffer>false</organismsDiffer>
    <experiments>3</experiments>
</comment>
<comment type="interaction">
    <interactant intactId="EBI-356410">
        <id>P08779</id>
    </interactant>
    <interactant intactId="EBI-2430095">
        <id>P12035</id>
        <label>KRT3</label>
    </interactant>
    <organismsDiffer>false</organismsDiffer>
    <experiments>3</experiments>
</comment>
<comment type="interaction">
    <interactant intactId="EBI-356410">
        <id>P08779</id>
    </interactant>
    <interactant intactId="EBI-2371606">
        <id>P19013</id>
        <label>KRT4</label>
    </interactant>
    <organismsDiffer>false</organismsDiffer>
    <experiments>3</experiments>
</comment>
<comment type="interaction">
    <interactant intactId="EBI-356410">
        <id>P08779</id>
    </interactant>
    <interactant intactId="EBI-702187">
        <id>P13647</id>
        <label>KRT5</label>
    </interactant>
    <organismsDiffer>false</organismsDiffer>
    <experiments>3</experiments>
</comment>
<comment type="interaction">
    <interactant intactId="EBI-356410">
        <id>P08779</id>
    </interactant>
    <interactant intactId="EBI-702198">
        <id>P02538</id>
        <label>KRT6A</label>
    </interactant>
    <organismsDiffer>false</organismsDiffer>
    <experiments>3</experiments>
</comment>
<comment type="interaction">
    <interactant intactId="EBI-356410">
        <id>P08779</id>
    </interactant>
    <interactant intactId="EBI-2564105">
        <id>P48668</id>
        <label>KRT6C</label>
    </interactant>
    <organismsDiffer>false</organismsDiffer>
    <experiments>3</experiments>
</comment>
<comment type="interaction">
    <interactant intactId="EBI-356410">
        <id>P08779</id>
    </interactant>
    <interactant intactId="EBI-2952676">
        <id>Q3SY84</id>
        <label>KRT71</label>
    </interactant>
    <organismsDiffer>false</organismsDiffer>
    <experiments>3</experiments>
</comment>
<comment type="interaction">
    <interactant intactId="EBI-356410">
        <id>P08779</id>
    </interactant>
    <interactant intactId="EBI-1221280">
        <id>Q14CN4</id>
        <label>KRT72</label>
    </interactant>
    <organismsDiffer>false</organismsDiffer>
    <experiments>3</experiments>
</comment>
<comment type="interaction">
    <interactant intactId="EBI-356410">
        <id>P08779</id>
    </interactant>
    <interactant intactId="EBI-12039441">
        <id>Q86Y46-2</id>
        <label>KRT73</label>
    </interactant>
    <organismsDiffer>false</organismsDiffer>
    <experiments>3</experiments>
</comment>
<comment type="interaction">
    <interactant intactId="EBI-356410">
        <id>P08779</id>
    </interactant>
    <interactant intactId="EBI-968660">
        <id>Q7RTS7</id>
        <label>KRT74</label>
    </interactant>
    <organismsDiffer>false</organismsDiffer>
    <experiments>3</experiments>
</comment>
<comment type="interaction">
    <interactant intactId="EBI-356410">
        <id>P08779</id>
    </interactant>
    <interactant intactId="EBI-2952745">
        <id>Q01546</id>
        <label>KRT76</label>
    </interactant>
    <organismsDiffer>false</organismsDiffer>
    <experiments>3</experiments>
</comment>
<comment type="interaction">
    <interactant intactId="EBI-356410">
        <id>P08779</id>
    </interactant>
    <interactant intactId="EBI-1056564">
        <id>Q8N1N4</id>
        <label>KRT78</label>
    </interactant>
    <organismsDiffer>false</organismsDiffer>
    <experiments>3</experiments>
</comment>
<comment type="interaction">
    <interactant intactId="EBI-356410">
        <id>P08779</id>
    </interactant>
    <interactant intactId="EBI-2514135">
        <id>Q5XKE5</id>
        <label>KRT79</label>
    </interactant>
    <organismsDiffer>false</organismsDiffer>
    <experiments>3</experiments>
</comment>
<comment type="interaction">
    <interactant intactId="EBI-356410">
        <id>P08779</id>
    </interactant>
    <interactant intactId="EBI-297852">
        <id>P05787</id>
        <label>KRT8</label>
    </interactant>
    <organismsDiffer>false</organismsDiffer>
    <experiments>3</experiments>
</comment>
<comment type="interaction">
    <interactant intactId="EBI-356410">
        <id>P08779</id>
    </interactant>
    <interactant intactId="EBI-11999246">
        <id>Q6KB66-2</id>
        <label>KRT80</label>
    </interactant>
    <organismsDiffer>false</organismsDiffer>
    <experiments>3</experiments>
</comment>
<comment type="interaction">
    <interactant intactId="EBI-356410">
        <id>P08779</id>
    </interactant>
    <interactant intactId="EBI-739648">
        <id>Q14533</id>
        <label>KRT81</label>
    </interactant>
    <organismsDiffer>false</organismsDiffer>
    <experiments>3</experiments>
</comment>
<comment type="interaction">
    <interactant intactId="EBI-356410">
        <id>P08779</id>
    </interactant>
    <interactant intactId="EBI-10221390">
        <id>P78385</id>
        <label>KRT83</label>
    </interactant>
    <organismsDiffer>false</organismsDiffer>
    <experiments>3</experiments>
</comment>
<comment type="interaction">
    <interactant intactId="EBI-356410">
        <id>P08779</id>
    </interactant>
    <interactant intactId="EBI-1049371">
        <id>P78386</id>
        <label>KRT85</label>
    </interactant>
    <organismsDiffer>false</organismsDiffer>
    <experiments>3</experiments>
</comment>
<comment type="interaction">
    <interactant intactId="EBI-356410">
        <id>P08779</id>
    </interactant>
    <interactant intactId="EBI-9996498">
        <id>O43790</id>
        <label>KRT86</label>
    </interactant>
    <organismsDiffer>false</organismsDiffer>
    <experiments>3</experiments>
</comment>
<comment type="interaction">
    <interactant intactId="EBI-356410">
        <id>P08779</id>
    </interactant>
    <interactant intactId="EBI-8639312">
        <id>P25800</id>
        <label>LMO1</label>
    </interactant>
    <organismsDiffer>false</organismsDiffer>
    <experiments>3</experiments>
</comment>
<comment type="interaction">
    <interactant intactId="EBI-356410">
        <id>P08779</id>
    </interactant>
    <interactant intactId="EBI-739832">
        <id>Q8TBB1</id>
        <label>LNX1</label>
    </interactant>
    <organismsDiffer>false</organismsDiffer>
    <experiments>3</experiments>
</comment>
<comment type="interaction">
    <interactant intactId="EBI-356410">
        <id>P08779</id>
    </interactant>
    <interactant intactId="EBI-11978579">
        <id>O95983-2</id>
        <label>MBD3</label>
    </interactant>
    <organismsDiffer>false</organismsDiffer>
    <experiments>3</experiments>
</comment>
<comment type="interaction">
    <interactant intactId="EBI-356410">
        <id>P08779</id>
    </interactant>
    <interactant intactId="EBI-602382">
        <id>Q16512</id>
        <label>PKN1</label>
    </interactant>
    <organismsDiffer>false</organismsDiffer>
    <experiments>3</experiments>
</comment>
<comment type="interaction">
    <interactant intactId="EBI-356410">
        <id>P08779</id>
    </interactant>
    <interactant intactId="EBI-10320765">
        <id>Q9UGP5-2</id>
        <label>POLL</label>
    </interactant>
    <organismsDiffer>false</organismsDiffer>
    <experiments>3</experiments>
</comment>
<comment type="interaction">
    <interactant intactId="EBI-356410">
        <id>P08779</id>
    </interactant>
    <interactant intactId="EBI-2557469">
        <id>Q6NYC8</id>
        <label>PPP1R18</label>
    </interactant>
    <organismsDiffer>false</organismsDiffer>
    <experiments>3</experiments>
</comment>
<comment type="interaction">
    <interactant intactId="EBI-356410">
        <id>P08779</id>
    </interactant>
    <interactant intactId="EBI-1383852">
        <id>P54646</id>
        <label>PRKAA2</label>
    </interactant>
    <organismsDiffer>false</organismsDiffer>
    <experiments>3</experiments>
</comment>
<comment type="interaction">
    <interactant intactId="EBI-356410">
        <id>P08779</id>
    </interactant>
    <interactant intactId="EBI-752074">
        <id>P41219</id>
        <label>PRPH</label>
    </interactant>
    <organismsDiffer>false</organismsDiffer>
    <experiments>3</experiments>
</comment>
<comment type="interaction">
    <interactant intactId="EBI-356410">
        <id>P08779</id>
    </interactant>
    <interactant intactId="EBI-11983583">
        <id>Q3MIT2</id>
        <label>PUS10</label>
    </interactant>
    <organismsDiffer>false</organismsDiffer>
    <experiments>3</experiments>
</comment>
<comment type="interaction">
    <interactant intactId="EBI-356410">
        <id>P08779</id>
    </interactant>
    <interactant intactId="EBI-10303490">
        <id>Q9C0C4</id>
        <label>SEMA4C</label>
    </interactant>
    <organismsDiffer>false</organismsDiffer>
    <experiments>3</experiments>
</comment>
<comment type="interaction">
    <interactant intactId="EBI-356410">
        <id>P08779</id>
    </interactant>
    <interactant intactId="EBI-743117">
        <id>Q96ES7</id>
        <label>SGF29</label>
    </interactant>
    <organismsDiffer>false</organismsDiffer>
    <experiments>4</experiments>
</comment>
<comment type="interaction">
    <interactant intactId="EBI-356410">
        <id>P08779</id>
    </interactant>
    <interactant intactId="EBI-358489">
        <id>Q96GM5</id>
        <label>SMARCD1</label>
    </interactant>
    <organismsDiffer>false</organismsDiffer>
    <experiments>3</experiments>
</comment>
<comment type="interaction">
    <interactant intactId="EBI-356410">
        <id>P08779</id>
    </interactant>
    <interactant intactId="EBI-455078">
        <id>Q969G3</id>
        <label>SMARCE1</label>
    </interactant>
    <organismsDiffer>false</organismsDiffer>
    <experiments>3</experiments>
</comment>
<comment type="interaction">
    <interactant intactId="EBI-356410">
        <id>P08779</id>
    </interactant>
    <interactant intactId="EBI-296723">
        <id>O95295</id>
        <label>SNAPIN</label>
    </interactant>
    <organismsDiffer>false</organismsDiffer>
    <experiments>3</experiments>
</comment>
<comment type="interaction">
    <interactant intactId="EBI-356410">
        <id>P08779</id>
    </interactant>
    <interactant intactId="EBI-740781">
        <id>Q9BT92</id>
        <label>TCHP</label>
    </interactant>
    <organismsDiffer>false</organismsDiffer>
    <experiments>3</experiments>
</comment>
<comment type="interaction">
    <interactant intactId="EBI-356410">
        <id>P08779</id>
    </interactant>
    <interactant intactId="EBI-346882">
        <id>Q99816</id>
        <label>TSG101</label>
    </interactant>
    <organismsDiffer>false</organismsDiffer>
    <experiments>3</experiments>
</comment>
<comment type="interaction">
    <interactant intactId="EBI-356410">
        <id>P08779</id>
    </interactant>
    <interactant intactId="EBI-9090990">
        <id>Q5W5X9-3</id>
        <label>TTC23</label>
    </interactant>
    <organismsDiffer>false</organismsDiffer>
    <experiments>3</experiments>
</comment>
<comment type="interaction">
    <interactant intactId="EBI-356410">
        <id>P08779</id>
    </interactant>
    <interactant intactId="EBI-6116822">
        <id>Q8N3L3</id>
        <label>TXLNB</label>
    </interactant>
    <organismsDiffer>false</organismsDiffer>
    <experiments>3</experiments>
</comment>
<comment type="interaction">
    <interactant intactId="EBI-356410">
        <id>P08779</id>
    </interactant>
    <interactant intactId="EBI-739895">
        <id>Q8N6Y0</id>
        <label>USHBP1</label>
    </interactant>
    <organismsDiffer>false</organismsDiffer>
    <experiments>3</experiments>
</comment>
<comment type="tissue specificity">
    <text evidence="18">Expressed in the corneal epithelium (at protein level).</text>
</comment>
<comment type="mass spectrometry" mass="50924.66" method="MALDI" evidence="9"/>
<comment type="disease" evidence="4 5 6 8 10 12 13 14 15 16 17 19">
    <disease id="DI-00891">
        <name>Pachyonychia congenita 1</name>
        <acronym>PC1</acronym>
        <description>An autosomal dominant ectodermal dysplasia characterized by hypertrophic nail dystrophy resulting in onchyogryposis (thickening and increase in curvature of the nail), palmoplantar keratoderma, follicular hyperkeratosis, and oral leukokeratosis. Hyperhidrosis of the hands and feet is usually present.</description>
        <dbReference type="MIM" id="167200"/>
    </disease>
    <text>The disease is caused by variants affecting the gene represented in this entry.</text>
</comment>
<comment type="disease" evidence="20">
    <disease id="DI-02590">
        <name>Keratoderma, palmoplantar, non-epidermolytic, focal 1</name>
        <acronym>FNEPPK1</acronym>
        <description>A dermatological disorder characterized by non-epidermolytic palmoplantar keratoderma limited to the pressure points on the balls of the feet, with later mild involvement on the palms. Oral, genital and follicular keratotic lesions are often present.</description>
        <dbReference type="MIM" id="613000"/>
    </disease>
    <text>The disease is caused by variants affecting the gene represented in this entry.</text>
</comment>
<comment type="disease">
    <text>KRT16 and KRT17 are coexpressed only in pathological situations such as metaplasias and carcinomas of the uterine cervix and in psoriasis vulgaris.</text>
</comment>
<comment type="miscellaneous">
    <text>There are two types of cytoskeletal and microfibrillar keratin, I (acidic) and II (neutral to basic) (40-55 and 56-70 kDa, respectively).</text>
</comment>
<comment type="similarity">
    <text evidence="2">Belongs to the intermediate filament family.</text>
</comment>
<feature type="chain" id="PRO_0000063662" description="Keratin, type I cytoskeletal 16">
    <location>
        <begin position="1"/>
        <end position="473"/>
    </location>
</feature>
<feature type="domain" description="IF rod" evidence="2">
    <location>
        <begin position="117"/>
        <end position="428"/>
    </location>
</feature>
<feature type="region of interest" description="Head">
    <location>
        <begin position="1"/>
        <end position="116"/>
    </location>
</feature>
<feature type="region of interest" description="Coil 1A">
    <location>
        <begin position="117"/>
        <end position="152"/>
    </location>
</feature>
<feature type="region of interest" description="Linker 1">
    <location>
        <begin position="153"/>
        <end position="170"/>
    </location>
</feature>
<feature type="region of interest" description="Coil 1B">
    <location>
        <begin position="171"/>
        <end position="262"/>
    </location>
</feature>
<feature type="region of interest" description="Linker 12">
    <location>
        <begin position="263"/>
        <end position="285"/>
    </location>
</feature>
<feature type="region of interest" description="Coil 2">
    <location>
        <begin position="286"/>
        <end position="424"/>
    </location>
</feature>
<feature type="region of interest" description="Tail">
    <location>
        <begin position="425"/>
        <end position="473"/>
    </location>
</feature>
<feature type="region of interest" description="Disordered" evidence="3">
    <location>
        <begin position="428"/>
        <end position="473"/>
    </location>
</feature>
<feature type="compositionally biased region" description="Low complexity" evidence="3">
    <location>
        <begin position="429"/>
        <end position="452"/>
    </location>
</feature>
<feature type="compositionally biased region" description="Low complexity" evidence="3">
    <location>
        <begin position="462"/>
        <end position="473"/>
    </location>
</feature>
<feature type="sequence variant" id="VAR_012854" description="Found in a patient with localized epidermolytic hyperkeratosis in the right palm and the right sole; uncertain significance; somatic mutation." evidence="7">
    <location>
        <begin position="104"/>
        <end position="107"/>
    </location>
</feature>
<feature type="sequence variant" id="VAR_017065" description="In PC1; dbSNP:rs28928894." evidence="10">
    <original>M</original>
    <variation>T</variation>
    <location>
        <position position="121"/>
    </location>
</feature>
<feature type="sequence variant" id="VAR_012855" description="In PC1; dbSNP:rs59349773." evidence="5">
    <original>Q</original>
    <variation>P</variation>
    <location>
        <position position="122"/>
    </location>
</feature>
<feature type="sequence variant" id="VAR_072436" description="In PC1; dbSNP:rs58293603." evidence="12">
    <original>L</original>
    <variation>H</variation>
    <location>
        <position position="124"/>
    </location>
</feature>
<feature type="sequence variant" id="VAR_072437" description="In PC1; dbSNP:rs58293603." evidence="12">
    <original>L</original>
    <variation>P</variation>
    <location>
        <position position="124"/>
    </location>
</feature>
<feature type="sequence variant" id="VAR_013837" description="In PC1; dbSNP:rs58293603." evidence="6">
    <original>L</original>
    <variation>R</variation>
    <location>
        <position position="124"/>
    </location>
</feature>
<feature type="sequence variant" id="VAR_072438" description="In PC1; dbSNP:rs58608173." evidence="12 14">
    <original>N</original>
    <variation>D</variation>
    <location>
        <position position="125"/>
    </location>
</feature>
<feature type="sequence variant" id="VAR_072439" description="In PC1; requires 2 nucleotide substitutions; dbSNP:rs587777717." evidence="16">
    <original>N</original>
    <variation>G</variation>
    <location>
        <position position="125"/>
    </location>
</feature>
<feature type="sequence variant" id="VAR_009183" description="In FNEPPK1 and PC1; dbSNP:rs60723330." evidence="12 13 14 15 20">
    <original>N</original>
    <variation>S</variation>
    <location>
        <position position="125"/>
    </location>
</feature>
<feature type="sequence variant" id="VAR_009184" description="In FNEPPK1 and PC1; dbSNP:rs59856285." evidence="12 14 20">
    <original>R</original>
    <variation>C</variation>
    <location>
        <position position="127"/>
    </location>
</feature>
<feature type="sequence variant" id="VAR_012856" description="In PC1; dbSNP:rs57424749." evidence="5 13 14 15">
    <original>R</original>
    <variation>P</variation>
    <location>
        <position position="127"/>
    </location>
</feature>
<feature type="sequence variant" id="VAR_017066" description="In PC1; dbSNP:rs28928895." evidence="10 13">
    <original>L</original>
    <variation>Q</variation>
    <location>
        <position position="128"/>
    </location>
</feature>
<feature type="sequence variant" id="VAR_035440" description="In PC1." evidence="4">
    <location>
        <position position="130"/>
    </location>
</feature>
<feature type="sequence variant" id="VAR_003846" description="In PC1; dbSNP:rs60944949." evidence="12 15 19">
    <original>L</original>
    <variation>P</variation>
    <location>
        <position position="132"/>
    </location>
</feature>
<feature type="sequence variant" id="VAR_017067" description="In PC1; late onset; dbSNP:rs59328451." evidence="8">
    <original>K</original>
    <variation>N</variation>
    <location>
        <position position="354"/>
    </location>
</feature>
<feature type="sequence variant" id="VAR_072440" description="In PC1." evidence="17">
    <original>L</original>
    <variation>P</variation>
    <location>
        <position position="421"/>
    </location>
</feature>
<feature type="sequence conflict" description="In Ref. 3; AAB35421." evidence="21" ref="3">
    <original>T</original>
    <variation>A</variation>
    <location>
        <position position="2"/>
    </location>
</feature>
<feature type="sequence conflict" description="In Ref. 1; AAA59460." evidence="21" ref="1">
    <original>G</original>
    <variation>A</variation>
    <location>
        <position position="26"/>
    </location>
</feature>
<feature type="sequence conflict" description="In Ref. 1; AAA59460." evidence="21" ref="1">
    <original>G</original>
    <variation>A</variation>
    <location>
        <position position="38"/>
    </location>
</feature>
<feature type="sequence conflict" description="In Ref. 1; AAA59460." evidence="21" ref="1">
    <original>RAP</original>
    <variation>PA</variation>
    <location>
        <begin position="41"/>
        <end position="43"/>
    </location>
</feature>
<feature type="sequence conflict" description="In Ref. 1; AAA59460." evidence="21" ref="1">
    <original>GL</original>
    <variation>A</variation>
    <location>
        <begin position="49"/>
        <end position="50"/>
    </location>
</feature>
<feature type="sequence conflict" description="In Ref. 1; AAA59460." evidence="21" ref="1">
    <original>QPI</original>
    <variation>HAL</variation>
    <location>
        <begin position="187"/>
        <end position="189"/>
    </location>
</feature>
<feature type="sequence conflict" description="In Ref. 1; AAA59460." evidence="21" ref="1">
    <original>HELA</original>
    <variation>ARTG</variation>
    <location>
        <begin position="208"/>
        <end position="211"/>
    </location>
</feature>
<feature type="sequence conflict" description="In Ref. 1; AAA59460." evidence="21" ref="1">
    <original>S</original>
    <variation>R</variation>
    <location>
        <position position="352"/>
    </location>
</feature>
<feature type="sequence conflict" description="In Ref. 1; AAA59460." evidence="21" ref="1">
    <original>SRQTRPILK</original>
    <variation>AVRPGPSS</variation>
    <location>
        <begin position="452"/>
        <end position="460"/>
    </location>
</feature>
<proteinExistence type="evidence at protein level"/>
<protein>
    <recommendedName>
        <fullName>Keratin, type I cytoskeletal 16</fullName>
    </recommendedName>
    <alternativeName>
        <fullName>Cytokeratin-16</fullName>
        <shortName>CK-16</shortName>
    </alternativeName>
    <alternativeName>
        <fullName>Keratin-16</fullName>
        <shortName>K16</shortName>
    </alternativeName>
</protein>
<name>K1C16_HUMAN</name>
<dbReference type="EMBL" id="M28439">
    <property type="protein sequence ID" value="AAA59460.1"/>
    <property type="molecule type" value="Genomic_DNA"/>
</dbReference>
<dbReference type="EMBL" id="M28432">
    <property type="protein sequence ID" value="AAA59460.1"/>
    <property type="status" value="JOINED"/>
    <property type="molecule type" value="Genomic_DNA"/>
</dbReference>
<dbReference type="EMBL" id="M28433">
    <property type="protein sequence ID" value="AAA59460.1"/>
    <property type="status" value="JOINED"/>
    <property type="molecule type" value="Genomic_DNA"/>
</dbReference>
<dbReference type="EMBL" id="M28434">
    <property type="protein sequence ID" value="AAA59460.1"/>
    <property type="status" value="JOINED"/>
    <property type="molecule type" value="Genomic_DNA"/>
</dbReference>
<dbReference type="EMBL" id="M28435">
    <property type="protein sequence ID" value="AAA59460.1"/>
    <property type="status" value="JOINED"/>
    <property type="molecule type" value="Genomic_DNA"/>
</dbReference>
<dbReference type="EMBL" id="M28436">
    <property type="protein sequence ID" value="AAA59460.1"/>
    <property type="status" value="JOINED"/>
    <property type="molecule type" value="Genomic_DNA"/>
</dbReference>
<dbReference type="EMBL" id="M28437">
    <property type="protein sequence ID" value="AAA59460.1"/>
    <property type="status" value="JOINED"/>
    <property type="molecule type" value="Genomic_DNA"/>
</dbReference>
<dbReference type="EMBL" id="M28438">
    <property type="protein sequence ID" value="AAA59460.1"/>
    <property type="status" value="JOINED"/>
    <property type="molecule type" value="Genomic_DNA"/>
</dbReference>
<dbReference type="EMBL" id="S79867">
    <property type="protein sequence ID" value="AAB35421.1"/>
    <property type="molecule type" value="mRNA"/>
</dbReference>
<dbReference type="EMBL" id="AF061809">
    <property type="protein sequence ID" value="AAD15829.1"/>
    <property type="molecule type" value="Genomic_DNA"/>
</dbReference>
<dbReference type="EMBL" id="AF061812">
    <property type="protein sequence ID" value="AAC99326.1"/>
    <property type="molecule type" value="mRNA"/>
</dbReference>
<dbReference type="EMBL" id="AK290853">
    <property type="protein sequence ID" value="BAF83542.1"/>
    <property type="molecule type" value="mRNA"/>
</dbReference>
<dbReference type="EMBL" id="CH471152">
    <property type="protein sequence ID" value="EAW60749.1"/>
    <property type="molecule type" value="Genomic_DNA"/>
</dbReference>
<dbReference type="EMBL" id="BC039169">
    <property type="protein sequence ID" value="AAH39169.1"/>
    <property type="molecule type" value="mRNA"/>
</dbReference>
<dbReference type="EMBL" id="S78514">
    <property type="protein sequence ID" value="AAB34564.1"/>
    <property type="molecule type" value="Genomic_DNA"/>
</dbReference>
<dbReference type="CCDS" id="CCDS11401.1"/>
<dbReference type="PIR" id="A33652">
    <property type="entry name" value="A33652"/>
</dbReference>
<dbReference type="PIR" id="JC4313">
    <property type="entry name" value="JC4313"/>
</dbReference>
<dbReference type="RefSeq" id="NP_005548.2">
    <property type="nucleotide sequence ID" value="NM_005557.3"/>
</dbReference>
<dbReference type="SMR" id="P08779"/>
<dbReference type="BioGRID" id="110066">
    <property type="interactions" value="200"/>
</dbReference>
<dbReference type="CORUM" id="P08779"/>
<dbReference type="FunCoup" id="P08779">
    <property type="interactions" value="273"/>
</dbReference>
<dbReference type="IntAct" id="P08779">
    <property type="interactions" value="99"/>
</dbReference>
<dbReference type="MINT" id="P08779"/>
<dbReference type="STRING" id="9606.ENSP00000301653"/>
<dbReference type="DrugBank" id="DB01593">
    <property type="generic name" value="Zinc"/>
</dbReference>
<dbReference type="DrugBank" id="DB14487">
    <property type="generic name" value="Zinc acetate"/>
</dbReference>
<dbReference type="GlyGen" id="P08779">
    <property type="glycosylation" value="1 site, 1 O-linked glycan (1 site)"/>
</dbReference>
<dbReference type="iPTMnet" id="P08779"/>
<dbReference type="PhosphoSitePlus" id="P08779"/>
<dbReference type="SwissPalm" id="P08779"/>
<dbReference type="BioMuta" id="KRT16"/>
<dbReference type="DMDM" id="23503075"/>
<dbReference type="jPOST" id="P08779"/>
<dbReference type="MassIVE" id="P08779"/>
<dbReference type="PaxDb" id="9606-ENSP00000301653"/>
<dbReference type="PeptideAtlas" id="P08779"/>
<dbReference type="PRIDE" id="P08779"/>
<dbReference type="ProteomicsDB" id="52166"/>
<dbReference type="Antibodypedia" id="3602">
    <property type="antibodies" value="674 antibodies from 38 providers"/>
</dbReference>
<dbReference type="DNASU" id="3868"/>
<dbReference type="Ensembl" id="ENST00000301653.9">
    <property type="protein sequence ID" value="ENSP00000301653.3"/>
    <property type="gene ID" value="ENSG00000186832.9"/>
</dbReference>
<dbReference type="GeneID" id="3868"/>
<dbReference type="KEGG" id="hsa:3868"/>
<dbReference type="MANE-Select" id="ENST00000301653.9">
    <property type="protein sequence ID" value="ENSP00000301653.3"/>
    <property type="RefSeq nucleotide sequence ID" value="NM_005557.4"/>
    <property type="RefSeq protein sequence ID" value="NP_005548.2"/>
</dbReference>
<dbReference type="UCSC" id="uc002hxg.5">
    <property type="organism name" value="human"/>
</dbReference>
<dbReference type="AGR" id="HGNC:6423"/>
<dbReference type="CTD" id="3868"/>
<dbReference type="DisGeNET" id="3868"/>
<dbReference type="GeneCards" id="KRT16"/>
<dbReference type="GeneReviews" id="KRT16"/>
<dbReference type="HGNC" id="HGNC:6423">
    <property type="gene designation" value="KRT16"/>
</dbReference>
<dbReference type="HPA" id="ENSG00000186832">
    <property type="expression patterns" value="Tissue enhanced (cervix, esophagus, skin, vagina)"/>
</dbReference>
<dbReference type="MalaCards" id="KRT16"/>
<dbReference type="MIM" id="148067">
    <property type="type" value="gene"/>
</dbReference>
<dbReference type="MIM" id="167200">
    <property type="type" value="phenotype"/>
</dbReference>
<dbReference type="MIM" id="613000">
    <property type="type" value="phenotype"/>
</dbReference>
<dbReference type="neXtProt" id="NX_P08779"/>
<dbReference type="OpenTargets" id="ENSG00000186832"/>
<dbReference type="Orphanet" id="2199">
    <property type="disease" value="Epidermolytic palmoplantar keratoderma"/>
</dbReference>
<dbReference type="Orphanet" id="448264">
    <property type="disease" value="Isolated focal non-epidermolytic palmoplantar keratoderma"/>
</dbReference>
<dbReference type="Orphanet" id="2309">
    <property type="disease" value="Pachyonychia congenita"/>
</dbReference>
<dbReference type="PharmGKB" id="PA30210"/>
<dbReference type="VEuPathDB" id="HostDB:ENSG00000186832"/>
<dbReference type="eggNOG" id="ENOG502QTM6">
    <property type="taxonomic scope" value="Eukaryota"/>
</dbReference>
<dbReference type="GeneTree" id="ENSGT00940000154602"/>
<dbReference type="HOGENOM" id="CLU_012560_8_3_1"/>
<dbReference type="InParanoid" id="P08779"/>
<dbReference type="OMA" id="GHQTRPI"/>
<dbReference type="OrthoDB" id="2441647at2759"/>
<dbReference type="PAN-GO" id="P08779">
    <property type="GO annotations" value="4 GO annotations based on evolutionary models"/>
</dbReference>
<dbReference type="PhylomeDB" id="P08779"/>
<dbReference type="TreeFam" id="TF332742"/>
<dbReference type="PathwayCommons" id="P08779"/>
<dbReference type="Reactome" id="R-HSA-6805567">
    <property type="pathway name" value="Keratinization"/>
</dbReference>
<dbReference type="Reactome" id="R-HSA-6809371">
    <property type="pathway name" value="Formation of the cornified envelope"/>
</dbReference>
<dbReference type="SignaLink" id="P08779"/>
<dbReference type="SIGNOR" id="P08779"/>
<dbReference type="BioGRID-ORCS" id="3868">
    <property type="hits" value="24 hits in 1147 CRISPR screens"/>
</dbReference>
<dbReference type="ChiTaRS" id="KRT16">
    <property type="organism name" value="human"/>
</dbReference>
<dbReference type="GeneWiki" id="Keratin_16"/>
<dbReference type="GenomeRNAi" id="3868"/>
<dbReference type="Pharos" id="P08779">
    <property type="development level" value="Tbio"/>
</dbReference>
<dbReference type="PRO" id="PR:P08779"/>
<dbReference type="Proteomes" id="UP000005640">
    <property type="component" value="Chromosome 17"/>
</dbReference>
<dbReference type="RNAct" id="P08779">
    <property type="molecule type" value="protein"/>
</dbReference>
<dbReference type="Bgee" id="ENSG00000186832">
    <property type="expression patterns" value="Expressed in gingival epithelium and 113 other cell types or tissues"/>
</dbReference>
<dbReference type="ExpressionAtlas" id="P08779">
    <property type="expression patterns" value="baseline and differential"/>
</dbReference>
<dbReference type="GO" id="GO:0001533">
    <property type="term" value="C:cornified envelope"/>
    <property type="evidence" value="ECO:0007669"/>
    <property type="project" value="Ensembl"/>
</dbReference>
<dbReference type="GO" id="GO:0005856">
    <property type="term" value="C:cytoskeleton"/>
    <property type="evidence" value="ECO:0000314"/>
    <property type="project" value="UniProtKB"/>
</dbReference>
<dbReference type="GO" id="GO:0005829">
    <property type="term" value="C:cytosol"/>
    <property type="evidence" value="ECO:0000304"/>
    <property type="project" value="Reactome"/>
</dbReference>
<dbReference type="GO" id="GO:0070062">
    <property type="term" value="C:extracellular exosome"/>
    <property type="evidence" value="ECO:0007005"/>
    <property type="project" value="UniProtKB"/>
</dbReference>
<dbReference type="GO" id="GO:0005882">
    <property type="term" value="C:intermediate filament"/>
    <property type="evidence" value="ECO:0000303"/>
    <property type="project" value="UniProtKB"/>
</dbReference>
<dbReference type="GO" id="GO:0045095">
    <property type="term" value="C:keratin filament"/>
    <property type="evidence" value="ECO:0000318"/>
    <property type="project" value="GO_Central"/>
</dbReference>
<dbReference type="GO" id="GO:0005634">
    <property type="term" value="C:nucleus"/>
    <property type="evidence" value="ECO:0007005"/>
    <property type="project" value="UniProtKB"/>
</dbReference>
<dbReference type="GO" id="GO:0005200">
    <property type="term" value="F:structural constituent of cytoskeleton"/>
    <property type="evidence" value="ECO:0000303"/>
    <property type="project" value="UniProtKB"/>
</dbReference>
<dbReference type="GO" id="GO:0007010">
    <property type="term" value="P:cytoskeleton organization"/>
    <property type="evidence" value="ECO:0000303"/>
    <property type="project" value="UniProtKB"/>
</dbReference>
<dbReference type="GO" id="GO:0030855">
    <property type="term" value="P:epithelial cell differentiation"/>
    <property type="evidence" value="ECO:0000318"/>
    <property type="project" value="GO_Central"/>
</dbReference>
<dbReference type="GO" id="GO:0061436">
    <property type="term" value="P:establishment of skin barrier"/>
    <property type="evidence" value="ECO:0000250"/>
    <property type="project" value="UniProtKB"/>
</dbReference>
<dbReference type="GO" id="GO:0042633">
    <property type="term" value="P:hair cycle"/>
    <property type="evidence" value="ECO:0000314"/>
    <property type="project" value="UniProtKB"/>
</dbReference>
<dbReference type="GO" id="GO:0006954">
    <property type="term" value="P:inflammatory response"/>
    <property type="evidence" value="ECO:0000250"/>
    <property type="project" value="UniProtKB"/>
</dbReference>
<dbReference type="GO" id="GO:0045087">
    <property type="term" value="P:innate immune response"/>
    <property type="evidence" value="ECO:0000250"/>
    <property type="project" value="UniProtKB"/>
</dbReference>
<dbReference type="GO" id="GO:0045109">
    <property type="term" value="P:intermediate filament organization"/>
    <property type="evidence" value="ECO:0000318"/>
    <property type="project" value="GO_Central"/>
</dbReference>
<dbReference type="GO" id="GO:0031424">
    <property type="term" value="P:keratinization"/>
    <property type="evidence" value="ECO:0000250"/>
    <property type="project" value="UniProtKB"/>
</dbReference>
<dbReference type="GO" id="GO:0030216">
    <property type="term" value="P:keratinocyte differentiation"/>
    <property type="evidence" value="ECO:0000250"/>
    <property type="project" value="UniProtKB"/>
</dbReference>
<dbReference type="GO" id="GO:0051546">
    <property type="term" value="P:keratinocyte migration"/>
    <property type="evidence" value="ECO:0000250"/>
    <property type="project" value="UniProtKB"/>
</dbReference>
<dbReference type="GO" id="GO:0002009">
    <property type="term" value="P:morphogenesis of an epithelium"/>
    <property type="evidence" value="ECO:0000250"/>
    <property type="project" value="UniProtKB"/>
</dbReference>
<dbReference type="GO" id="GO:0030336">
    <property type="term" value="P:negative regulation of cell migration"/>
    <property type="evidence" value="ECO:0000314"/>
    <property type="project" value="UniProtKB"/>
</dbReference>
<dbReference type="FunFam" id="1.20.5.1160:FF:000002">
    <property type="entry name" value="Type I keratin 10"/>
    <property type="match status" value="1"/>
</dbReference>
<dbReference type="FunFam" id="1.20.5.170:FF:000002">
    <property type="entry name" value="Type I keratin KA11"/>
    <property type="match status" value="1"/>
</dbReference>
<dbReference type="FunFam" id="1.20.5.500:FF:000001">
    <property type="entry name" value="Type II keratin 23"/>
    <property type="match status" value="1"/>
</dbReference>
<dbReference type="Gene3D" id="1.20.5.170">
    <property type="match status" value="1"/>
</dbReference>
<dbReference type="Gene3D" id="1.20.5.500">
    <property type="entry name" value="Single helix bin"/>
    <property type="match status" value="1"/>
</dbReference>
<dbReference type="Gene3D" id="1.20.5.1160">
    <property type="entry name" value="Vasodilator-stimulated phosphoprotein"/>
    <property type="match status" value="1"/>
</dbReference>
<dbReference type="InterPro" id="IPR018039">
    <property type="entry name" value="IF_conserved"/>
</dbReference>
<dbReference type="InterPro" id="IPR039008">
    <property type="entry name" value="IF_rod_dom"/>
</dbReference>
<dbReference type="InterPro" id="IPR002957">
    <property type="entry name" value="Keratin_I"/>
</dbReference>
<dbReference type="PANTHER" id="PTHR23239">
    <property type="entry name" value="INTERMEDIATE FILAMENT"/>
    <property type="match status" value="1"/>
</dbReference>
<dbReference type="PANTHER" id="PTHR23239:SF105">
    <property type="entry name" value="KERATIN, TYPE I CYTOSKELETAL 16"/>
    <property type="match status" value="1"/>
</dbReference>
<dbReference type="Pfam" id="PF00038">
    <property type="entry name" value="Filament"/>
    <property type="match status" value="1"/>
</dbReference>
<dbReference type="PRINTS" id="PR01248">
    <property type="entry name" value="TYPE1KERATIN"/>
</dbReference>
<dbReference type="SMART" id="SM01391">
    <property type="entry name" value="Filament"/>
    <property type="match status" value="1"/>
</dbReference>
<dbReference type="SUPFAM" id="SSF64593">
    <property type="entry name" value="Intermediate filament protein, coiled coil region"/>
    <property type="match status" value="2"/>
</dbReference>
<dbReference type="PROSITE" id="PS00226">
    <property type="entry name" value="IF_ROD_1"/>
    <property type="match status" value="1"/>
</dbReference>
<dbReference type="PROSITE" id="PS51842">
    <property type="entry name" value="IF_ROD_2"/>
    <property type="match status" value="1"/>
</dbReference>
<accession>P08779</accession>
<accession>A8K488</accession>
<accession>P30654</accession>
<accession>Q16402</accession>
<accession>Q9UBG8</accession>
<evidence type="ECO:0000250" key="1">
    <source>
        <dbReference type="UniProtKB" id="Q9Z2K1"/>
    </source>
</evidence>
<evidence type="ECO:0000255" key="2">
    <source>
        <dbReference type="PROSITE-ProRule" id="PRU01188"/>
    </source>
</evidence>
<evidence type="ECO:0000256" key="3">
    <source>
        <dbReference type="SAM" id="MobiDB-lite"/>
    </source>
</evidence>
<evidence type="ECO:0000269" key="4">
    <source>
    </source>
</evidence>
<evidence type="ECO:0000269" key="5">
    <source>
    </source>
</evidence>
<evidence type="ECO:0000269" key="6">
    <source>
    </source>
</evidence>
<evidence type="ECO:0000269" key="7">
    <source>
    </source>
</evidence>
<evidence type="ECO:0000269" key="8">
    <source>
    </source>
</evidence>
<evidence type="ECO:0000269" key="9">
    <source>
    </source>
</evidence>
<evidence type="ECO:0000269" key="10">
    <source>
    </source>
</evidence>
<evidence type="ECO:0000269" key="11">
    <source>
    </source>
</evidence>
<evidence type="ECO:0000269" key="12">
    <source>
    </source>
</evidence>
<evidence type="ECO:0000269" key="13">
    <source>
    </source>
</evidence>
<evidence type="ECO:0000269" key="14">
    <source>
    </source>
</evidence>
<evidence type="ECO:0000269" key="15">
    <source>
    </source>
</evidence>
<evidence type="ECO:0000269" key="16">
    <source>
    </source>
</evidence>
<evidence type="ECO:0000269" key="17">
    <source>
    </source>
</evidence>
<evidence type="ECO:0000269" key="18">
    <source>
    </source>
</evidence>
<evidence type="ECO:0000269" key="19">
    <source>
    </source>
</evidence>
<evidence type="ECO:0000269" key="20">
    <source>
    </source>
</evidence>
<evidence type="ECO:0000305" key="21"/>
<organism>
    <name type="scientific">Homo sapiens</name>
    <name type="common">Human</name>
    <dbReference type="NCBI Taxonomy" id="9606"/>
    <lineage>
        <taxon>Eukaryota</taxon>
        <taxon>Metazoa</taxon>
        <taxon>Chordata</taxon>
        <taxon>Craniata</taxon>
        <taxon>Vertebrata</taxon>
        <taxon>Euteleostomi</taxon>
        <taxon>Mammalia</taxon>
        <taxon>Eutheria</taxon>
        <taxon>Euarchontoglires</taxon>
        <taxon>Primates</taxon>
        <taxon>Haplorrhini</taxon>
        <taxon>Catarrhini</taxon>
        <taxon>Hominidae</taxon>
        <taxon>Homo</taxon>
    </lineage>
</organism>
<reference key="1">
    <citation type="journal article" date="1986" name="Mol. Cell. Biol.">
        <title>Three tightly linked genes encoding human type I keratins: conservation of sequence in the 5'-untranslated leader and 5'-upstream regions of coexpressed keratin genes.</title>
        <authorList>
            <person name="Raychaudhury A."/>
            <person name="Marchuk D."/>
            <person name="Lindhurst M."/>
            <person name="Fuchs E."/>
        </authorList>
    </citation>
    <scope>NUCLEOTIDE SEQUENCE [GENOMIC DNA]</scope>
</reference>
<reference key="2">
    <citation type="journal article" date="1988" name="Mol. Cell. Biol.">
        <title>A group of type I keratin genes on human chromosome 17: characterization and expression.</title>
        <authorList>
            <person name="Rosenberg M."/>
            <person name="Raychaudhury A."/>
            <person name="Shows T.B."/>
            <person name="le Beau M.M."/>
            <person name="Fuchs E."/>
        </authorList>
    </citation>
    <scope>SEQUENCE REVISION</scope>
</reference>
<reference key="3">
    <citation type="journal article" date="1995" name="Biochem. Biophys. Res. Commun.">
        <title>cDNA cloning and bacterial expression of the human type I keratin 16.</title>
        <authorList>
            <person name="Paladini R.D."/>
            <person name="Takahashi K."/>
            <person name="Gant T.M."/>
            <person name="Coulombe P.A."/>
        </authorList>
    </citation>
    <scope>NUCLEOTIDE SEQUENCE [MRNA]</scope>
    <source>
        <tissue>Keratinocyte</tissue>
    </source>
</reference>
<reference key="4">
    <citation type="submission" date="1998-04" db="EMBL/GenBank/DDBJ databases">
        <title>Cloning of multiple keratin 16 genes: genotype-phenotype correlation and protein expression studies in pachyonychia congenita type 1 and focal palmoplantar keratoderma.</title>
        <authorList>
            <person name="Smith F.J.D."/>
            <person name="Fisher M.P."/>
            <person name="Healy E."/>
            <person name="Rees J.L."/>
            <person name="McKusick V.A."/>
            <person name="Bonifas J.M."/>
            <person name="Epstein E.H. Jr."/>
            <person name="Tan E."/>
            <person name="Uitto J."/>
            <person name="McLean W.H.I."/>
        </authorList>
    </citation>
    <scope>NUCLEOTIDE SEQUENCE [GENOMIC DNA / MRNA]</scope>
</reference>
<reference key="5">
    <citation type="journal article" date="2004" name="Nat. Genet.">
        <title>Complete sequencing and characterization of 21,243 full-length human cDNAs.</title>
        <authorList>
            <person name="Ota T."/>
            <person name="Suzuki Y."/>
            <person name="Nishikawa T."/>
            <person name="Otsuki T."/>
            <person name="Sugiyama T."/>
            <person name="Irie R."/>
            <person name="Wakamatsu A."/>
            <person name="Hayashi K."/>
            <person name="Sato H."/>
            <person name="Nagai K."/>
            <person name="Kimura K."/>
            <person name="Makita H."/>
            <person name="Sekine M."/>
            <person name="Obayashi M."/>
            <person name="Nishi T."/>
            <person name="Shibahara T."/>
            <person name="Tanaka T."/>
            <person name="Ishii S."/>
            <person name="Yamamoto J."/>
            <person name="Saito K."/>
            <person name="Kawai Y."/>
            <person name="Isono Y."/>
            <person name="Nakamura Y."/>
            <person name="Nagahari K."/>
            <person name="Murakami K."/>
            <person name="Yasuda T."/>
            <person name="Iwayanagi T."/>
            <person name="Wagatsuma M."/>
            <person name="Shiratori A."/>
            <person name="Sudo H."/>
            <person name="Hosoiri T."/>
            <person name="Kaku Y."/>
            <person name="Kodaira H."/>
            <person name="Kondo H."/>
            <person name="Sugawara M."/>
            <person name="Takahashi M."/>
            <person name="Kanda K."/>
            <person name="Yokoi T."/>
            <person name="Furuya T."/>
            <person name="Kikkawa E."/>
            <person name="Omura Y."/>
            <person name="Abe K."/>
            <person name="Kamihara K."/>
            <person name="Katsuta N."/>
            <person name="Sato K."/>
            <person name="Tanikawa M."/>
            <person name="Yamazaki M."/>
            <person name="Ninomiya K."/>
            <person name="Ishibashi T."/>
            <person name="Yamashita H."/>
            <person name="Murakawa K."/>
            <person name="Fujimori K."/>
            <person name="Tanai H."/>
            <person name="Kimata M."/>
            <person name="Watanabe M."/>
            <person name="Hiraoka S."/>
            <person name="Chiba Y."/>
            <person name="Ishida S."/>
            <person name="Ono Y."/>
            <person name="Takiguchi S."/>
            <person name="Watanabe S."/>
            <person name="Yosida M."/>
            <person name="Hotuta T."/>
            <person name="Kusano J."/>
            <person name="Kanehori K."/>
            <person name="Takahashi-Fujii A."/>
            <person name="Hara H."/>
            <person name="Tanase T.-O."/>
            <person name="Nomura Y."/>
            <person name="Togiya S."/>
            <person name="Komai F."/>
            <person name="Hara R."/>
            <person name="Takeuchi K."/>
            <person name="Arita M."/>
            <person name="Imose N."/>
            <person name="Musashino K."/>
            <person name="Yuuki H."/>
            <person name="Oshima A."/>
            <person name="Sasaki N."/>
            <person name="Aotsuka S."/>
            <person name="Yoshikawa Y."/>
            <person name="Matsunawa H."/>
            <person name="Ichihara T."/>
            <person name="Shiohata N."/>
            <person name="Sano S."/>
            <person name="Moriya S."/>
            <person name="Momiyama H."/>
            <person name="Satoh N."/>
            <person name="Takami S."/>
            <person name="Terashima Y."/>
            <person name="Suzuki O."/>
            <person name="Nakagawa S."/>
            <person name="Senoh A."/>
            <person name="Mizoguchi H."/>
            <person name="Goto Y."/>
            <person name="Shimizu F."/>
            <person name="Wakebe H."/>
            <person name="Hishigaki H."/>
            <person name="Watanabe T."/>
            <person name="Sugiyama A."/>
            <person name="Takemoto M."/>
            <person name="Kawakami B."/>
            <person name="Yamazaki M."/>
            <person name="Watanabe K."/>
            <person name="Kumagai A."/>
            <person name="Itakura S."/>
            <person name="Fukuzumi Y."/>
            <person name="Fujimori Y."/>
            <person name="Komiyama M."/>
            <person name="Tashiro H."/>
            <person name="Tanigami A."/>
            <person name="Fujiwara T."/>
            <person name="Ono T."/>
            <person name="Yamada K."/>
            <person name="Fujii Y."/>
            <person name="Ozaki K."/>
            <person name="Hirao M."/>
            <person name="Ohmori Y."/>
            <person name="Kawabata A."/>
            <person name="Hikiji T."/>
            <person name="Kobatake N."/>
            <person name="Inagaki H."/>
            <person name="Ikema Y."/>
            <person name="Okamoto S."/>
            <person name="Okitani R."/>
            <person name="Kawakami T."/>
            <person name="Noguchi S."/>
            <person name="Itoh T."/>
            <person name="Shigeta K."/>
            <person name="Senba T."/>
            <person name="Matsumura K."/>
            <person name="Nakajima Y."/>
            <person name="Mizuno T."/>
            <person name="Morinaga M."/>
            <person name="Sasaki M."/>
            <person name="Togashi T."/>
            <person name="Oyama M."/>
            <person name="Hata H."/>
            <person name="Watanabe M."/>
            <person name="Komatsu T."/>
            <person name="Mizushima-Sugano J."/>
            <person name="Satoh T."/>
            <person name="Shirai Y."/>
            <person name="Takahashi Y."/>
            <person name="Nakagawa K."/>
            <person name="Okumura K."/>
            <person name="Nagase T."/>
            <person name="Nomura N."/>
            <person name="Kikuchi H."/>
            <person name="Masuho Y."/>
            <person name="Yamashita R."/>
            <person name="Nakai K."/>
            <person name="Yada T."/>
            <person name="Nakamura Y."/>
            <person name="Ohara O."/>
            <person name="Isogai T."/>
            <person name="Sugano S."/>
        </authorList>
    </citation>
    <scope>NUCLEOTIDE SEQUENCE [LARGE SCALE MRNA]</scope>
    <source>
        <tissue>Mammary gland</tissue>
    </source>
</reference>
<reference key="6">
    <citation type="submission" date="2005-07" db="EMBL/GenBank/DDBJ databases">
        <authorList>
            <person name="Mural R.J."/>
            <person name="Istrail S."/>
            <person name="Sutton G.G."/>
            <person name="Florea L."/>
            <person name="Halpern A.L."/>
            <person name="Mobarry C.M."/>
            <person name="Lippert R."/>
            <person name="Walenz B."/>
            <person name="Shatkay H."/>
            <person name="Dew I."/>
            <person name="Miller J.R."/>
            <person name="Flanigan M.J."/>
            <person name="Edwards N.J."/>
            <person name="Bolanos R."/>
            <person name="Fasulo D."/>
            <person name="Halldorsson B.V."/>
            <person name="Hannenhalli S."/>
            <person name="Turner R."/>
            <person name="Yooseph S."/>
            <person name="Lu F."/>
            <person name="Nusskern D.R."/>
            <person name="Shue B.C."/>
            <person name="Zheng X.H."/>
            <person name="Zhong F."/>
            <person name="Delcher A.L."/>
            <person name="Huson D.H."/>
            <person name="Kravitz S.A."/>
            <person name="Mouchard L."/>
            <person name="Reinert K."/>
            <person name="Remington K.A."/>
            <person name="Clark A.G."/>
            <person name="Waterman M.S."/>
            <person name="Eichler E.E."/>
            <person name="Adams M.D."/>
            <person name="Hunkapiller M.W."/>
            <person name="Myers E.W."/>
            <person name="Venter J.C."/>
        </authorList>
    </citation>
    <scope>NUCLEOTIDE SEQUENCE [LARGE SCALE GENOMIC DNA]</scope>
</reference>
<reference key="7">
    <citation type="journal article" date="2004" name="Genome Res.">
        <title>The status, quality, and expansion of the NIH full-length cDNA project: the Mammalian Gene Collection (MGC).</title>
        <authorList>
            <consortium name="The MGC Project Team"/>
        </authorList>
    </citation>
    <scope>NUCLEOTIDE SEQUENCE [LARGE SCALE MRNA]</scope>
    <source>
        <tissue>Skin</tissue>
    </source>
</reference>
<reference key="8">
    <citation type="journal article" date="1995" name="Nat. Genet.">
        <title>Keratin 16 and keratin 17 mutations cause pachyonychia congenita.</title>
        <authorList>
            <person name="McLean W.H.I."/>
            <person name="Rugg E.L."/>
            <person name="Lunny D.P."/>
            <person name="Morley S.M."/>
            <person name="Lane E.B."/>
            <person name="Swensson O."/>
            <person name="Dopping-Hepenstal P.J.C."/>
            <person name="Griffiths W.A.D."/>
            <person name="Eady R.A.J."/>
            <person name="Higgins C."/>
            <person name="Navsaria H.A."/>
            <person name="Leigh I.M."/>
            <person name="Strachan T."/>
            <person name="Kunkeler L."/>
            <person name="Munro C.S."/>
        </authorList>
    </citation>
    <scope>NUCLEOTIDE SEQUENCE [GENOMIC DNA] OF 118-134</scope>
    <scope>VARIANT PC1 PRO-132</scope>
</reference>
<reference key="9">
    <citation type="journal article" date="1992" name="Electrophoresis">
        <title>Microsequences of 145 proteins recorded in the two-dimensional gel protein database of normal human epidermal keratinocytes.</title>
        <authorList>
            <person name="Rasmussen H.H."/>
            <person name="van Damme J."/>
            <person name="Puype M."/>
            <person name="Gesser B."/>
            <person name="Celis J.E."/>
            <person name="Vandekerckhove J."/>
        </authorList>
    </citation>
    <scope>PROTEIN SEQUENCE OF 137-148; 178-195 AND 264-283</scope>
    <source>
        <tissue>Keratinocyte</tissue>
    </source>
</reference>
<reference key="10">
    <citation type="journal article" date="2002" name="Proteomics">
        <title>Cluster analysis of an extensive human breast cancer cell line protein expression map database.</title>
        <authorList>
            <person name="Harris R.A."/>
            <person name="Yang A."/>
            <person name="Stein R.C."/>
            <person name="Lucy K."/>
            <person name="Brusten L."/>
            <person name="Herath A."/>
            <person name="Parekh R."/>
            <person name="Waterfield M.D."/>
            <person name="O'Hare M.J."/>
            <person name="Neville M.A."/>
            <person name="Page M.J."/>
            <person name="Zvelebil M.J."/>
        </authorList>
    </citation>
    <scope>MASS SPECTROMETRY</scope>
    <source>
        <tissue>Mammary cancer</tissue>
    </source>
</reference>
<reference key="11">
    <citation type="journal article" date="2005" name="J. Cell Sci.">
        <title>Identification of trichoplein, a novel keratin filament-binding protein.</title>
        <authorList>
            <person name="Nishizawa M."/>
            <person name="Izawa I."/>
            <person name="Inoko A."/>
            <person name="Hayashi Y."/>
            <person name="Nagata K."/>
            <person name="Yokoyama T."/>
            <person name="Usukura J."/>
            <person name="Inagaki M."/>
        </authorList>
    </citation>
    <scope>INTERACTION WITH TCHP</scope>
</reference>
<reference key="12">
    <citation type="journal article" date="2011" name="BMC Syst. Biol.">
        <title>Initial characterization of the human central proteome.</title>
        <authorList>
            <person name="Burkard T.R."/>
            <person name="Planyavsky M."/>
            <person name="Kaupe I."/>
            <person name="Breitwieser F.P."/>
            <person name="Buerckstuemmer T."/>
            <person name="Bennett K.L."/>
            <person name="Superti-Furga G."/>
            <person name="Colinge J."/>
        </authorList>
    </citation>
    <scope>IDENTIFICATION BY MASS SPECTROMETRY [LARGE SCALE ANALYSIS]</scope>
</reference>
<reference key="13">
    <citation type="journal article" date="2014" name="J. Proteomics">
        <title>An enzyme assisted RP-RPLC approach for in-depth analysis of human liver phosphoproteome.</title>
        <authorList>
            <person name="Bian Y."/>
            <person name="Song C."/>
            <person name="Cheng K."/>
            <person name="Dong M."/>
            <person name="Wang F."/>
            <person name="Huang J."/>
            <person name="Sun D."/>
            <person name="Wang L."/>
            <person name="Ye M."/>
            <person name="Zou H."/>
        </authorList>
    </citation>
    <scope>IDENTIFICATION BY MASS SPECTROMETRY [LARGE SCALE ANALYSIS]</scope>
    <source>
        <tissue>Liver</tissue>
    </source>
</reference>
<reference key="14">
    <citation type="journal article" date="2015" name="Proteomics">
        <title>N-terminome analysis of the human mitochondrial proteome.</title>
        <authorList>
            <person name="Vaca Jacome A.S."/>
            <person name="Rabilloud T."/>
            <person name="Schaeffer-Reiss C."/>
            <person name="Rompais M."/>
            <person name="Ayoub D."/>
            <person name="Lane L."/>
            <person name="Bairoch A."/>
            <person name="Van Dorsselaer A."/>
            <person name="Carapito C."/>
        </authorList>
    </citation>
    <scope>IDENTIFICATION BY MASS SPECTROMETRY [LARGE SCALE ANALYSIS]</scope>
</reference>
<reference key="15">
    <citation type="journal article" date="2016" name="Hum. Mol. Genet.">
        <title>Keratin 12 missense mutation induces the unfolded protein response and apoptosis in Meesmann epithelial corneal dystrophy.</title>
        <authorList>
            <person name="Allen E.H."/>
            <person name="Courtney D.G."/>
            <person name="Atkinson S.D."/>
            <person name="Moore J.E."/>
            <person name="Mairs L."/>
            <person name="Poulsen E.T."/>
            <person name="Schiroli D."/>
            <person name="Maurizi E."/>
            <person name="Cole C."/>
            <person name="Hickerson R.P."/>
            <person name="James J."/>
            <person name="Murgatroyd H."/>
            <person name="Smith F.J."/>
            <person name="MacEwen C."/>
            <person name="Enghild J.J."/>
            <person name="Nesbit M.A."/>
            <person name="Leslie Pedrioli D.M."/>
            <person name="McLean W.H."/>
            <person name="Moore C.B."/>
        </authorList>
    </citation>
    <scope>TISSUE SPECIFICITY</scope>
</reference>
<reference key="16">
    <citation type="journal article" date="1995" name="Hum. Mol. Genet.">
        <title>Novel mutations in keratin 16 gene underly focal nonepidermolytic palmoplantar keratoderma (NEPPK) in two families.</title>
        <authorList>
            <person name="Shamsheer M.K."/>
            <person name="Navsaria H.A."/>
            <person name="Stevens H.P."/>
            <person name="Ratnavel R.C."/>
            <person name="Purkis P.E."/>
            <person name="McLean W.H.I."/>
            <person name="Cook L.J."/>
            <person name="Griffiths W.A.D."/>
            <person name="Geschmeissner S."/>
            <person name="Spurr N."/>
            <person name="Leigh I.M."/>
        </authorList>
    </citation>
    <scope>VARIANTS FNEPPK1 SER-125 AND CYS-127</scope>
</reference>
<reference key="17">
    <citation type="journal article" date="1999" name="Br. J. Dermatol.">
        <title>Novel proline substitution mutations in keratin 16 in two cases of pachyonychia congenita type 1.</title>
        <authorList>
            <person name="Smith F.J.D."/>
            <person name="Del Monaco M."/>
            <person name="Steijlen P.M."/>
            <person name="Munro C.S."/>
            <person name="Morvay M."/>
            <person name="Coleman C.M."/>
            <person name="Rietveld F.J.R."/>
            <person name="Uitto J."/>
            <person name="McLean W.H.I."/>
        </authorList>
    </citation>
    <scope>VARIANTS PC1 PRO-122 AND PRO-127</scope>
</reference>
<reference key="18">
    <citation type="journal article" date="1999" name="Prenat. Diagn.">
        <title>Cloning of multiple keratin 16 genes facilitates prenatal diagnosis of pachyonychia congenita type 1.</title>
        <authorList>
            <person name="Smith F.J."/>
            <person name="McKusick V.A."/>
            <person name="Nielsen K."/>
            <person name="Pfendner E."/>
            <person name="Uitto J."/>
            <person name="McLean W.H.I."/>
        </authorList>
    </citation>
    <scope>VARIANT PC1 SER-130 DEL</scope>
</reference>
<reference key="19">
    <citation type="journal article" date="2000" name="Exp. Dermatol.">
        <title>Novel keratin 16 mutations and protein expression studies in pachyonychia congenita type 1 and focal palmoplantar keratoderma.</title>
        <authorList>
            <person name="Smith F.J."/>
            <person name="Fisher M.P."/>
            <person name="Healy E."/>
            <person name="Rees J.L."/>
            <person name="Bonifas J.M."/>
            <person name="Epstein E.H. Jr."/>
            <person name="Tan E.M."/>
            <person name="Uitto J."/>
            <person name="McLean W.H.I."/>
        </authorList>
    </citation>
    <scope>VARIANT PC1 ARG-124</scope>
</reference>
<reference key="20">
    <citation type="journal article" date="2000" name="J. Invest. Dermatol.">
        <title>A mutation in the V1 domain of K16 is responsible for unilateral palmoplantar verrucous nevus.</title>
        <authorList>
            <person name="Terrinoni A."/>
            <person name="Puddu P."/>
            <person name="Didona B."/>
            <person name="De Laurenzi V."/>
            <person name="Candi E."/>
            <person name="Smith F.J."/>
            <person name="McLean W.H.I."/>
            <person name="Melino G."/>
        </authorList>
    </citation>
    <scope>VARIANT 104-GLY--ALA-107 DEL</scope>
</reference>
<reference key="21">
    <citation type="journal article" date="2001" name="Br. J. Dermatol.">
        <title>Delayed-onset pachyonychia congenita associated with a novel mutation in the central 2B domain of keratin 16.</title>
        <authorList>
            <person name="Connors J.B."/>
            <person name="Rahil A.K."/>
            <person name="Smith F.J.D."/>
            <person name="McLean W.H.I."/>
            <person name="Milstone L.M."/>
        </authorList>
    </citation>
    <scope>VARIANT PC1 ASN-354</scope>
</reference>
<reference key="22">
    <citation type="journal article" date="2001" name="J. Invest. Dermatol.">
        <title>Novel and recurrent mutations in the genes encoding keratins K6a, K16 and K17 in 13 cases of pachyonychia congenita.</title>
        <authorList>
            <person name="Terrinoni A."/>
            <person name="Smith F.J.D."/>
            <person name="Didona B."/>
            <person name="Canzona F."/>
            <person name="Paradisi M."/>
            <person name="Huber M."/>
            <person name="Hohl D."/>
            <person name="David A."/>
            <person name="Verloes A."/>
            <person name="Leigh I.M."/>
            <person name="Munro C.S."/>
            <person name="Melino G."/>
            <person name="McLean W.H.I."/>
        </authorList>
    </citation>
    <scope>VARIANTS PC1 THR-121 AND GLN-128</scope>
</reference>
<reference key="23">
    <citation type="journal article" date="2005" name="J. Investig. Dermatol. Symp. Proc.">
        <title>The genetic basis of pachyonychia congenita.</title>
        <authorList>
            <person name="Smith F.J."/>
            <person name="Liao H."/>
            <person name="Cassidy A.J."/>
            <person name="Stewart A."/>
            <person name="Hamill K.J."/>
            <person name="Wood P."/>
            <person name="Joval I."/>
            <person name="van Steensel M.A."/>
            <person name="Bjoerck E."/>
            <person name="Callif-Daley F."/>
            <person name="Pals G."/>
            <person name="Collins P."/>
            <person name="Leachman S.A."/>
            <person name="Munro C.S."/>
            <person name="McLean W.H."/>
        </authorList>
    </citation>
    <scope>VARIANTS PC1 PRO-124; HIS-124; ASP-125; SER-125; CYS-127 AND PRO-132</scope>
</reference>
<reference key="24">
    <citation type="journal article" date="2007" name="J. Dermatol. Sci.">
        <title>A spectrum of mutations in keratins K6a, K16 and K17 causing pachyonychia congenita.</title>
        <authorList>
            <person name="Liao H."/>
            <person name="Sayers J.M."/>
            <person name="Wilson N.J."/>
            <person name="Irvine A.D."/>
            <person name="Mellerio J.E."/>
            <person name="Baselga E."/>
            <person name="Bayliss S.J."/>
            <person name="Uliana V."/>
            <person name="Fimiani M."/>
            <person name="Lane E.B."/>
            <person name="McLean W.H."/>
            <person name="Leachman S.A."/>
            <person name="Smith F.J."/>
        </authorList>
    </citation>
    <scope>VARIANTS PC1 SER-125; PRO-127 AND GLN-128</scope>
</reference>
<reference key="25">
    <citation type="journal article" date="2011" name="J. Invest. Dermatol.">
        <title>A large mutational study in pachyonychia congenita.</title>
        <authorList>
            <person name="Wilson N.J."/>
            <person name="Leachman S.A."/>
            <person name="Hansen C.D."/>
            <person name="McMullan A.C."/>
            <person name="Milstone L.M."/>
            <person name="Schwartz M.E."/>
            <person name="McLean W.H."/>
            <person name="Hull P.R."/>
            <person name="Smith F.J."/>
        </authorList>
    </citation>
    <scope>VARIANTS PC1 SER-125; PRO-127 AND PRO-132</scope>
</reference>
<reference key="26">
    <citation type="journal article" date="2011" name="J. Invest. Dermatol.">
        <title>Genotype-phenotype correlations among pachyonychia congenita patients with K16 mutations.</title>
        <authorList>
            <person name="Fu T."/>
            <person name="Leachman S.A."/>
            <person name="Wilson N.J."/>
            <person name="Smith F.J."/>
            <person name="Schwartz M.E."/>
            <person name="Tang J.Y."/>
        </authorList>
    </citation>
    <scope>VARIANTS PC1 SER-125; ASP-125; PRO-127 AND CYS-127</scope>
</reference>
<reference key="27">
    <citation type="journal article" date="2012" name="Eur. J. Dermatol.">
        <title>Two novel de novo mutations of KRT6A and KRT16 genes in two Chinese pachyonychia congenita pedigrees with fissured tongue or diffuse plantar keratoderma.</title>
        <authorList>
            <person name="Du Z.F."/>
            <person name="Xu C.M."/>
            <person name="Zhao Y."/>
            <person name="Liu W.T."/>
            <person name="Chen X.L."/>
            <person name="Chen C.Y."/>
            <person name="Fang H."/>
            <person name="Ke H.P."/>
            <person name="Zhang X.N."/>
        </authorList>
    </citation>
    <scope>VARIANT PC1 GLY-125</scope>
</reference>
<reference key="28">
    <citation type="journal article" date="2013" name="Exp. Dermatol.">
        <title>A new KRT16 mutation associated with a phenotype of pachyonychia congenita.</title>
        <authorList>
            <person name="Paris F."/>
            <person name="Hurtado C."/>
            <person name="Azon A."/>
            <person name="Aguado L."/>
            <person name="Vizmanos J.L."/>
        </authorList>
    </citation>
    <scope>VARIANT PC1 PRO-421</scope>
</reference>
<gene>
    <name type="primary">KRT16</name>
    <name type="synonym">KRT16A</name>
</gene>